<dbReference type="EMBL" id="CP000057">
    <property type="protein sequence ID" value="AAX87840.1"/>
    <property type="molecule type" value="Genomic_DNA"/>
</dbReference>
<dbReference type="RefSeq" id="WP_005625877.1">
    <property type="nucleotide sequence ID" value="NC_007146.2"/>
</dbReference>
<dbReference type="SMR" id="Q4QMA7"/>
<dbReference type="GeneID" id="93298803"/>
<dbReference type="KEGG" id="hit:NTHI0955"/>
<dbReference type="HOGENOM" id="CLU_098428_0_0_6"/>
<dbReference type="Proteomes" id="UP000002525">
    <property type="component" value="Chromosome"/>
</dbReference>
<dbReference type="GO" id="GO:1990904">
    <property type="term" value="C:ribonucleoprotein complex"/>
    <property type="evidence" value="ECO:0007669"/>
    <property type="project" value="UniProtKB-KW"/>
</dbReference>
<dbReference type="GO" id="GO:0005840">
    <property type="term" value="C:ribosome"/>
    <property type="evidence" value="ECO:0007669"/>
    <property type="project" value="UniProtKB-KW"/>
</dbReference>
<dbReference type="GO" id="GO:0019843">
    <property type="term" value="F:rRNA binding"/>
    <property type="evidence" value="ECO:0007669"/>
    <property type="project" value="UniProtKB-UniRule"/>
</dbReference>
<dbReference type="GO" id="GO:0003735">
    <property type="term" value="F:structural constituent of ribosome"/>
    <property type="evidence" value="ECO:0007669"/>
    <property type="project" value="InterPro"/>
</dbReference>
<dbReference type="GO" id="GO:0006412">
    <property type="term" value="P:translation"/>
    <property type="evidence" value="ECO:0007669"/>
    <property type="project" value="UniProtKB-UniRule"/>
</dbReference>
<dbReference type="FunFam" id="3.30.1370.30:FF:000003">
    <property type="entry name" value="30S ribosomal protein S8"/>
    <property type="match status" value="1"/>
</dbReference>
<dbReference type="FunFam" id="3.30.1490.10:FF:000001">
    <property type="entry name" value="30S ribosomal protein S8"/>
    <property type="match status" value="1"/>
</dbReference>
<dbReference type="Gene3D" id="3.30.1370.30">
    <property type="match status" value="1"/>
</dbReference>
<dbReference type="Gene3D" id="3.30.1490.10">
    <property type="match status" value="1"/>
</dbReference>
<dbReference type="HAMAP" id="MF_01302_B">
    <property type="entry name" value="Ribosomal_uS8_B"/>
    <property type="match status" value="1"/>
</dbReference>
<dbReference type="InterPro" id="IPR000630">
    <property type="entry name" value="Ribosomal_uS8"/>
</dbReference>
<dbReference type="InterPro" id="IPR047863">
    <property type="entry name" value="Ribosomal_uS8_CS"/>
</dbReference>
<dbReference type="InterPro" id="IPR035987">
    <property type="entry name" value="Ribosomal_uS8_sf"/>
</dbReference>
<dbReference type="NCBIfam" id="NF001109">
    <property type="entry name" value="PRK00136.1"/>
    <property type="match status" value="1"/>
</dbReference>
<dbReference type="PANTHER" id="PTHR11758">
    <property type="entry name" value="40S RIBOSOMAL PROTEIN S15A"/>
    <property type="match status" value="1"/>
</dbReference>
<dbReference type="Pfam" id="PF00410">
    <property type="entry name" value="Ribosomal_S8"/>
    <property type="match status" value="1"/>
</dbReference>
<dbReference type="SUPFAM" id="SSF56047">
    <property type="entry name" value="Ribosomal protein S8"/>
    <property type="match status" value="1"/>
</dbReference>
<dbReference type="PROSITE" id="PS00053">
    <property type="entry name" value="RIBOSOMAL_S8"/>
    <property type="match status" value="1"/>
</dbReference>
<feature type="chain" id="PRO_0000225871" description="Small ribosomal subunit protein uS8">
    <location>
        <begin position="1"/>
        <end position="130"/>
    </location>
</feature>
<comment type="function">
    <text evidence="1">One of the primary rRNA binding proteins, it binds directly to 16S rRNA central domain where it helps coordinate assembly of the platform of the 30S subunit.</text>
</comment>
<comment type="subunit">
    <text evidence="1">Part of the 30S ribosomal subunit. Contacts proteins S5 and S12.</text>
</comment>
<comment type="similarity">
    <text evidence="1">Belongs to the universal ribosomal protein uS8 family.</text>
</comment>
<reference key="1">
    <citation type="journal article" date="2005" name="J. Bacteriol.">
        <title>Genomic sequence of an otitis media isolate of nontypeable Haemophilus influenzae: comparative study with H. influenzae serotype d, strain KW20.</title>
        <authorList>
            <person name="Harrison A."/>
            <person name="Dyer D.W."/>
            <person name="Gillaspy A."/>
            <person name="Ray W.C."/>
            <person name="Mungur R."/>
            <person name="Carson M.B."/>
            <person name="Zhong H."/>
            <person name="Gipson J."/>
            <person name="Gipson M."/>
            <person name="Johnson L.S."/>
            <person name="Lewis L."/>
            <person name="Bakaletz L.O."/>
            <person name="Munson R.S. Jr."/>
        </authorList>
    </citation>
    <scope>NUCLEOTIDE SEQUENCE [LARGE SCALE GENOMIC DNA]</scope>
    <source>
        <strain>86-028NP</strain>
    </source>
</reference>
<gene>
    <name evidence="1" type="primary">rpsH</name>
    <name type="ordered locus">NTHI0955</name>
</gene>
<proteinExistence type="inferred from homology"/>
<organism>
    <name type="scientific">Haemophilus influenzae (strain 86-028NP)</name>
    <dbReference type="NCBI Taxonomy" id="281310"/>
    <lineage>
        <taxon>Bacteria</taxon>
        <taxon>Pseudomonadati</taxon>
        <taxon>Pseudomonadota</taxon>
        <taxon>Gammaproteobacteria</taxon>
        <taxon>Pasteurellales</taxon>
        <taxon>Pasteurellaceae</taxon>
        <taxon>Haemophilus</taxon>
    </lineage>
</organism>
<accession>Q4QMA7</accession>
<keyword id="KW-0687">Ribonucleoprotein</keyword>
<keyword id="KW-0689">Ribosomal protein</keyword>
<keyword id="KW-0694">RNA-binding</keyword>
<keyword id="KW-0699">rRNA-binding</keyword>
<evidence type="ECO:0000255" key="1">
    <source>
        <dbReference type="HAMAP-Rule" id="MF_01302"/>
    </source>
</evidence>
<evidence type="ECO:0000305" key="2"/>
<protein>
    <recommendedName>
        <fullName evidence="1">Small ribosomal subunit protein uS8</fullName>
    </recommendedName>
    <alternativeName>
        <fullName evidence="2">30S ribosomal protein S8</fullName>
    </alternativeName>
</protein>
<name>RS8_HAEI8</name>
<sequence>MSMQDPIADMLTRIRNGQAANKVAINMPSSKLKVAIANVLAAEGYIESVKVLEGAKPELEITLKYFQGKPVVESIQRVSRPGLRIYKRKDELPKVMGGLGVAVISTSKGVMTDRAARQAGLGGEIICYVA</sequence>